<dbReference type="EC" id="1.3.5.2" evidence="1"/>
<dbReference type="EMBL" id="CU234118">
    <property type="protein sequence ID" value="CAL80343.1"/>
    <property type="molecule type" value="Genomic_DNA"/>
</dbReference>
<dbReference type="RefSeq" id="WP_012030210.1">
    <property type="nucleotide sequence ID" value="NC_009445.1"/>
</dbReference>
<dbReference type="SMR" id="A4Z2G7"/>
<dbReference type="STRING" id="114615.BRADO6742"/>
<dbReference type="KEGG" id="bra:BRADO6742"/>
<dbReference type="eggNOG" id="COG0167">
    <property type="taxonomic scope" value="Bacteria"/>
</dbReference>
<dbReference type="HOGENOM" id="CLU_013640_2_1_5"/>
<dbReference type="OrthoDB" id="9802377at2"/>
<dbReference type="UniPathway" id="UPA00070">
    <property type="reaction ID" value="UER00946"/>
</dbReference>
<dbReference type="Proteomes" id="UP000001994">
    <property type="component" value="Chromosome"/>
</dbReference>
<dbReference type="GO" id="GO:0005737">
    <property type="term" value="C:cytoplasm"/>
    <property type="evidence" value="ECO:0007669"/>
    <property type="project" value="InterPro"/>
</dbReference>
<dbReference type="GO" id="GO:0005886">
    <property type="term" value="C:plasma membrane"/>
    <property type="evidence" value="ECO:0007669"/>
    <property type="project" value="UniProtKB-SubCell"/>
</dbReference>
<dbReference type="GO" id="GO:0106430">
    <property type="term" value="F:dihydroorotate dehydrogenase (quinone) activity"/>
    <property type="evidence" value="ECO:0007669"/>
    <property type="project" value="UniProtKB-EC"/>
</dbReference>
<dbReference type="GO" id="GO:0006207">
    <property type="term" value="P:'de novo' pyrimidine nucleobase biosynthetic process"/>
    <property type="evidence" value="ECO:0007669"/>
    <property type="project" value="InterPro"/>
</dbReference>
<dbReference type="GO" id="GO:0044205">
    <property type="term" value="P:'de novo' UMP biosynthetic process"/>
    <property type="evidence" value="ECO:0007669"/>
    <property type="project" value="UniProtKB-UniRule"/>
</dbReference>
<dbReference type="CDD" id="cd04738">
    <property type="entry name" value="DHOD_2_like"/>
    <property type="match status" value="1"/>
</dbReference>
<dbReference type="Gene3D" id="3.20.20.70">
    <property type="entry name" value="Aldolase class I"/>
    <property type="match status" value="1"/>
</dbReference>
<dbReference type="HAMAP" id="MF_00225">
    <property type="entry name" value="DHO_dh_type2"/>
    <property type="match status" value="1"/>
</dbReference>
<dbReference type="InterPro" id="IPR013785">
    <property type="entry name" value="Aldolase_TIM"/>
</dbReference>
<dbReference type="InterPro" id="IPR050074">
    <property type="entry name" value="DHO_dehydrogenase"/>
</dbReference>
<dbReference type="InterPro" id="IPR005719">
    <property type="entry name" value="Dihydroorotate_DH_2"/>
</dbReference>
<dbReference type="InterPro" id="IPR005720">
    <property type="entry name" value="Dihydroorotate_DH_cat"/>
</dbReference>
<dbReference type="InterPro" id="IPR001295">
    <property type="entry name" value="Dihydroorotate_DH_CS"/>
</dbReference>
<dbReference type="NCBIfam" id="NF003645">
    <property type="entry name" value="PRK05286.1-2"/>
    <property type="match status" value="1"/>
</dbReference>
<dbReference type="NCBIfam" id="NF003652">
    <property type="entry name" value="PRK05286.2-5"/>
    <property type="match status" value="1"/>
</dbReference>
<dbReference type="NCBIfam" id="TIGR01036">
    <property type="entry name" value="pyrD_sub2"/>
    <property type="match status" value="1"/>
</dbReference>
<dbReference type="PANTHER" id="PTHR48109:SF4">
    <property type="entry name" value="DIHYDROOROTATE DEHYDROGENASE (QUINONE), MITOCHONDRIAL"/>
    <property type="match status" value="1"/>
</dbReference>
<dbReference type="PANTHER" id="PTHR48109">
    <property type="entry name" value="DIHYDROOROTATE DEHYDROGENASE (QUINONE), MITOCHONDRIAL-RELATED"/>
    <property type="match status" value="1"/>
</dbReference>
<dbReference type="Pfam" id="PF01180">
    <property type="entry name" value="DHO_dh"/>
    <property type="match status" value="1"/>
</dbReference>
<dbReference type="SUPFAM" id="SSF51395">
    <property type="entry name" value="FMN-linked oxidoreductases"/>
    <property type="match status" value="1"/>
</dbReference>
<dbReference type="PROSITE" id="PS00911">
    <property type="entry name" value="DHODEHASE_1"/>
    <property type="match status" value="1"/>
</dbReference>
<dbReference type="PROSITE" id="PS00912">
    <property type="entry name" value="DHODEHASE_2"/>
    <property type="match status" value="1"/>
</dbReference>
<evidence type="ECO:0000255" key="1">
    <source>
        <dbReference type="HAMAP-Rule" id="MF_00225"/>
    </source>
</evidence>
<proteinExistence type="inferred from homology"/>
<feature type="chain" id="PRO_1000024156" description="Dihydroorotate dehydrogenase (quinone)">
    <location>
        <begin position="1"/>
        <end position="364"/>
    </location>
</feature>
<feature type="active site" description="Nucleophile" evidence="1">
    <location>
        <position position="173"/>
    </location>
</feature>
<feature type="binding site" evidence="1">
    <location>
        <begin position="61"/>
        <end position="65"/>
    </location>
    <ligand>
        <name>FMN</name>
        <dbReference type="ChEBI" id="CHEBI:58210"/>
    </ligand>
</feature>
<feature type="binding site" evidence="1">
    <location>
        <position position="65"/>
    </location>
    <ligand>
        <name>substrate</name>
    </ligand>
</feature>
<feature type="binding site" evidence="1">
    <location>
        <position position="85"/>
    </location>
    <ligand>
        <name>FMN</name>
        <dbReference type="ChEBI" id="CHEBI:58210"/>
    </ligand>
</feature>
<feature type="binding site" evidence="1">
    <location>
        <begin position="110"/>
        <end position="114"/>
    </location>
    <ligand>
        <name>substrate</name>
    </ligand>
</feature>
<feature type="binding site" evidence="1">
    <location>
        <position position="139"/>
    </location>
    <ligand>
        <name>FMN</name>
        <dbReference type="ChEBI" id="CHEBI:58210"/>
    </ligand>
</feature>
<feature type="binding site" evidence="1">
    <location>
        <position position="170"/>
    </location>
    <ligand>
        <name>FMN</name>
        <dbReference type="ChEBI" id="CHEBI:58210"/>
    </ligand>
</feature>
<feature type="binding site" evidence="1">
    <location>
        <position position="170"/>
    </location>
    <ligand>
        <name>substrate</name>
    </ligand>
</feature>
<feature type="binding site" evidence="1">
    <location>
        <position position="175"/>
    </location>
    <ligand>
        <name>substrate</name>
    </ligand>
</feature>
<feature type="binding site" evidence="1">
    <location>
        <position position="214"/>
    </location>
    <ligand>
        <name>FMN</name>
        <dbReference type="ChEBI" id="CHEBI:58210"/>
    </ligand>
</feature>
<feature type="binding site" evidence="1">
    <location>
        <position position="242"/>
    </location>
    <ligand>
        <name>FMN</name>
        <dbReference type="ChEBI" id="CHEBI:58210"/>
    </ligand>
</feature>
<feature type="binding site" evidence="1">
    <location>
        <begin position="243"/>
        <end position="244"/>
    </location>
    <ligand>
        <name>substrate</name>
    </ligand>
</feature>
<feature type="binding site" evidence="1">
    <location>
        <position position="266"/>
    </location>
    <ligand>
        <name>FMN</name>
        <dbReference type="ChEBI" id="CHEBI:58210"/>
    </ligand>
</feature>
<feature type="binding site" evidence="1">
    <location>
        <position position="295"/>
    </location>
    <ligand>
        <name>FMN</name>
        <dbReference type="ChEBI" id="CHEBI:58210"/>
    </ligand>
</feature>
<feature type="binding site" evidence="1">
    <location>
        <begin position="316"/>
        <end position="317"/>
    </location>
    <ligand>
        <name>FMN</name>
        <dbReference type="ChEBI" id="CHEBI:58210"/>
    </ligand>
</feature>
<protein>
    <recommendedName>
        <fullName evidence="1">Dihydroorotate dehydrogenase (quinone)</fullName>
        <ecNumber evidence="1">1.3.5.2</ecNumber>
    </recommendedName>
    <alternativeName>
        <fullName evidence="1">DHOdehase</fullName>
        <shortName evidence="1">DHOD</shortName>
        <shortName evidence="1">DHODase</shortName>
    </alternativeName>
    <alternativeName>
        <fullName evidence="1">Dihydroorotate oxidase</fullName>
    </alternativeName>
</protein>
<organism>
    <name type="scientific">Bradyrhizobium sp. (strain ORS 278)</name>
    <dbReference type="NCBI Taxonomy" id="114615"/>
    <lineage>
        <taxon>Bacteria</taxon>
        <taxon>Pseudomonadati</taxon>
        <taxon>Pseudomonadota</taxon>
        <taxon>Alphaproteobacteria</taxon>
        <taxon>Hyphomicrobiales</taxon>
        <taxon>Nitrobacteraceae</taxon>
        <taxon>Bradyrhizobium</taxon>
    </lineage>
</organism>
<gene>
    <name evidence="1" type="primary">pyrD</name>
    <name type="ordered locus">BRADO6742</name>
</gene>
<sequence>MIRAFDQLSLPLLRWLDAEDAHRLAIQGLKLLPAVKPRADDAKLAVRAFGLNFPNPVGMAAGFDKNAEVPDALLRLGFGFVEIGSVTPRPQSGNPRPRLFRLERDEAVINRMGFNNDGAEIVLRRLAGRANQGGIVGVNVGANKDSADRVADYVRLIETFAPVASYFTVNISSPNTPGLRNLQQASQLDDLLTKVLEARDRVRRKAGDTPVLLKIAPDLSLAELDDVVHVARSRGVDGMIVSNTTLARPNSLREQMRAKEQGGLSGRPLFRLSTRMVAETFVRVEGAFPLIGVGGIDTGGAALTKIRAGASLIQLYSSLVYKGLGLVESIKADLTSTLLRTGRESLSEIVGADAATITAEDWPV</sequence>
<comment type="function">
    <text evidence="1">Catalyzes the conversion of dihydroorotate to orotate with quinone as electron acceptor.</text>
</comment>
<comment type="catalytic activity">
    <reaction evidence="1">
        <text>(S)-dihydroorotate + a quinone = orotate + a quinol</text>
        <dbReference type="Rhea" id="RHEA:30187"/>
        <dbReference type="ChEBI" id="CHEBI:24646"/>
        <dbReference type="ChEBI" id="CHEBI:30839"/>
        <dbReference type="ChEBI" id="CHEBI:30864"/>
        <dbReference type="ChEBI" id="CHEBI:132124"/>
        <dbReference type="EC" id="1.3.5.2"/>
    </reaction>
</comment>
<comment type="cofactor">
    <cofactor evidence="1">
        <name>FMN</name>
        <dbReference type="ChEBI" id="CHEBI:58210"/>
    </cofactor>
    <text evidence="1">Binds 1 FMN per subunit.</text>
</comment>
<comment type="pathway">
    <text evidence="1">Pyrimidine metabolism; UMP biosynthesis via de novo pathway; orotate from (S)-dihydroorotate (quinone route): step 1/1.</text>
</comment>
<comment type="subunit">
    <text evidence="1">Monomer.</text>
</comment>
<comment type="subcellular location">
    <subcellularLocation>
        <location evidence="1">Cell membrane</location>
        <topology evidence="1">Peripheral membrane protein</topology>
    </subcellularLocation>
</comment>
<comment type="similarity">
    <text evidence="1">Belongs to the dihydroorotate dehydrogenase family. Type 2 subfamily.</text>
</comment>
<accession>A4Z2G7</accession>
<keyword id="KW-1003">Cell membrane</keyword>
<keyword id="KW-0285">Flavoprotein</keyword>
<keyword id="KW-0288">FMN</keyword>
<keyword id="KW-0472">Membrane</keyword>
<keyword id="KW-0560">Oxidoreductase</keyword>
<keyword id="KW-0665">Pyrimidine biosynthesis</keyword>
<keyword id="KW-1185">Reference proteome</keyword>
<reference key="1">
    <citation type="journal article" date="2007" name="Science">
        <title>Legumes symbioses: absence of nod genes in photosynthetic bradyrhizobia.</title>
        <authorList>
            <person name="Giraud E."/>
            <person name="Moulin L."/>
            <person name="Vallenet D."/>
            <person name="Barbe V."/>
            <person name="Cytryn E."/>
            <person name="Avarre J.-C."/>
            <person name="Jaubert M."/>
            <person name="Simon D."/>
            <person name="Cartieaux F."/>
            <person name="Prin Y."/>
            <person name="Bena G."/>
            <person name="Hannibal L."/>
            <person name="Fardoux J."/>
            <person name="Kojadinovic M."/>
            <person name="Vuillet L."/>
            <person name="Lajus A."/>
            <person name="Cruveiller S."/>
            <person name="Rouy Z."/>
            <person name="Mangenot S."/>
            <person name="Segurens B."/>
            <person name="Dossat C."/>
            <person name="Franck W.L."/>
            <person name="Chang W.-S."/>
            <person name="Saunders E."/>
            <person name="Bruce D."/>
            <person name="Richardson P."/>
            <person name="Normand P."/>
            <person name="Dreyfus B."/>
            <person name="Pignol D."/>
            <person name="Stacey G."/>
            <person name="Emerich D."/>
            <person name="Vermeglio A."/>
            <person name="Medigue C."/>
            <person name="Sadowsky M."/>
        </authorList>
    </citation>
    <scope>NUCLEOTIDE SEQUENCE [LARGE SCALE GENOMIC DNA]</scope>
    <source>
        <strain>ORS 278</strain>
    </source>
</reference>
<name>PYRD_BRASO</name>